<comment type="function">
    <text evidence="1">Promotes RNA polymerase assembly. Latches the N- and C-terminal regions of the beta' subunit thereby facilitating its interaction with the beta and alpha subunits.</text>
</comment>
<comment type="catalytic activity">
    <reaction evidence="1">
        <text>RNA(n) + a ribonucleoside 5'-triphosphate = RNA(n+1) + diphosphate</text>
        <dbReference type="Rhea" id="RHEA:21248"/>
        <dbReference type="Rhea" id="RHEA-COMP:14527"/>
        <dbReference type="Rhea" id="RHEA-COMP:17342"/>
        <dbReference type="ChEBI" id="CHEBI:33019"/>
        <dbReference type="ChEBI" id="CHEBI:61557"/>
        <dbReference type="ChEBI" id="CHEBI:140395"/>
        <dbReference type="EC" id="2.7.7.6"/>
    </reaction>
</comment>
<comment type="subunit">
    <text evidence="1">The RNAP catalytic core consists of 2 alpha, 1 beta, 1 beta' and 1 omega subunit. When a sigma factor is associated with the core the holoenzyme is formed, which can initiate transcription.</text>
</comment>
<comment type="similarity">
    <text evidence="1">Belongs to the RNA polymerase subunit omega family.</text>
</comment>
<proteinExistence type="inferred from homology"/>
<name>RPOZ_RUEPO</name>
<gene>
    <name evidence="1" type="primary">rpoZ</name>
    <name type="ordered locus">SPO3204</name>
</gene>
<dbReference type="EC" id="2.7.7.6" evidence="1"/>
<dbReference type="EMBL" id="CP000031">
    <property type="protein sequence ID" value="AAV96439.1"/>
    <property type="molecule type" value="Genomic_DNA"/>
</dbReference>
<dbReference type="RefSeq" id="WP_011048894.1">
    <property type="nucleotide sequence ID" value="NC_003911.12"/>
</dbReference>
<dbReference type="SMR" id="Q5LNK0"/>
<dbReference type="STRING" id="246200.SPO3204"/>
<dbReference type="PaxDb" id="246200-SPO3204"/>
<dbReference type="KEGG" id="sil:SPO3204"/>
<dbReference type="eggNOG" id="COG1758">
    <property type="taxonomic scope" value="Bacteria"/>
</dbReference>
<dbReference type="HOGENOM" id="CLU_125406_2_0_5"/>
<dbReference type="OrthoDB" id="9796300at2"/>
<dbReference type="Proteomes" id="UP000001023">
    <property type="component" value="Chromosome"/>
</dbReference>
<dbReference type="GO" id="GO:0000428">
    <property type="term" value="C:DNA-directed RNA polymerase complex"/>
    <property type="evidence" value="ECO:0007669"/>
    <property type="project" value="UniProtKB-KW"/>
</dbReference>
<dbReference type="GO" id="GO:0003677">
    <property type="term" value="F:DNA binding"/>
    <property type="evidence" value="ECO:0007669"/>
    <property type="project" value="UniProtKB-UniRule"/>
</dbReference>
<dbReference type="GO" id="GO:0003899">
    <property type="term" value="F:DNA-directed RNA polymerase activity"/>
    <property type="evidence" value="ECO:0007669"/>
    <property type="project" value="UniProtKB-UniRule"/>
</dbReference>
<dbReference type="GO" id="GO:0006351">
    <property type="term" value="P:DNA-templated transcription"/>
    <property type="evidence" value="ECO:0007669"/>
    <property type="project" value="UniProtKB-UniRule"/>
</dbReference>
<dbReference type="Gene3D" id="3.90.940.10">
    <property type="match status" value="1"/>
</dbReference>
<dbReference type="HAMAP" id="MF_00366">
    <property type="entry name" value="RNApol_bact_RpoZ"/>
    <property type="match status" value="1"/>
</dbReference>
<dbReference type="InterPro" id="IPR003716">
    <property type="entry name" value="DNA-dir_RNA_pol_omega"/>
</dbReference>
<dbReference type="InterPro" id="IPR006110">
    <property type="entry name" value="Pol_omega/Rpo6/RPB6"/>
</dbReference>
<dbReference type="InterPro" id="IPR036161">
    <property type="entry name" value="RPB6/omega-like_sf"/>
</dbReference>
<dbReference type="NCBIfam" id="TIGR00690">
    <property type="entry name" value="rpoZ"/>
    <property type="match status" value="1"/>
</dbReference>
<dbReference type="PANTHER" id="PTHR34476">
    <property type="entry name" value="DNA-DIRECTED RNA POLYMERASE SUBUNIT OMEGA"/>
    <property type="match status" value="1"/>
</dbReference>
<dbReference type="PANTHER" id="PTHR34476:SF1">
    <property type="entry name" value="DNA-DIRECTED RNA POLYMERASE SUBUNIT OMEGA"/>
    <property type="match status" value="1"/>
</dbReference>
<dbReference type="Pfam" id="PF01192">
    <property type="entry name" value="RNA_pol_Rpb6"/>
    <property type="match status" value="1"/>
</dbReference>
<dbReference type="SMART" id="SM01409">
    <property type="entry name" value="RNA_pol_Rpb6"/>
    <property type="match status" value="1"/>
</dbReference>
<dbReference type="SUPFAM" id="SSF63562">
    <property type="entry name" value="RPB6/omega subunit-like"/>
    <property type="match status" value="1"/>
</dbReference>
<evidence type="ECO:0000255" key="1">
    <source>
        <dbReference type="HAMAP-Rule" id="MF_00366"/>
    </source>
</evidence>
<keyword id="KW-0240">DNA-directed RNA polymerase</keyword>
<keyword id="KW-0548">Nucleotidyltransferase</keyword>
<keyword id="KW-1185">Reference proteome</keyword>
<keyword id="KW-0804">Transcription</keyword>
<keyword id="KW-0808">Transferase</keyword>
<accession>Q5LNK0</accession>
<sequence>MARVTVEDCVDKVPNRFELVLLAAHRAREISAGAAITVDRDNDKNPVVSLREIADETQSADDLRERLIEANQTQIEVDEPEEDQMALLMGAESDRPVEDDMSEERLLRALMEAQGQG</sequence>
<feature type="chain" id="PRO_0000237507" description="DNA-directed RNA polymerase subunit omega">
    <location>
        <begin position="1"/>
        <end position="117"/>
    </location>
</feature>
<organism>
    <name type="scientific">Ruegeria pomeroyi (strain ATCC 700808 / DSM 15171 / DSS-3)</name>
    <name type="common">Silicibacter pomeroyi</name>
    <dbReference type="NCBI Taxonomy" id="246200"/>
    <lineage>
        <taxon>Bacteria</taxon>
        <taxon>Pseudomonadati</taxon>
        <taxon>Pseudomonadota</taxon>
        <taxon>Alphaproteobacteria</taxon>
        <taxon>Rhodobacterales</taxon>
        <taxon>Roseobacteraceae</taxon>
        <taxon>Ruegeria</taxon>
    </lineage>
</organism>
<protein>
    <recommendedName>
        <fullName evidence="1">DNA-directed RNA polymerase subunit omega</fullName>
        <shortName evidence="1">RNAP omega subunit</shortName>
        <ecNumber evidence="1">2.7.7.6</ecNumber>
    </recommendedName>
    <alternativeName>
        <fullName evidence="1">RNA polymerase omega subunit</fullName>
    </alternativeName>
    <alternativeName>
        <fullName evidence="1">Transcriptase subunit omega</fullName>
    </alternativeName>
</protein>
<reference key="1">
    <citation type="journal article" date="2004" name="Nature">
        <title>Genome sequence of Silicibacter pomeroyi reveals adaptations to the marine environment.</title>
        <authorList>
            <person name="Moran M.A."/>
            <person name="Buchan A."/>
            <person name="Gonzalez J.M."/>
            <person name="Heidelberg J.F."/>
            <person name="Whitman W.B."/>
            <person name="Kiene R.P."/>
            <person name="Henriksen J.R."/>
            <person name="King G.M."/>
            <person name="Belas R."/>
            <person name="Fuqua C."/>
            <person name="Brinkac L.M."/>
            <person name="Lewis M."/>
            <person name="Johri S."/>
            <person name="Weaver B."/>
            <person name="Pai G."/>
            <person name="Eisen J.A."/>
            <person name="Rahe E."/>
            <person name="Sheldon W.M."/>
            <person name="Ye W."/>
            <person name="Miller T.R."/>
            <person name="Carlton J."/>
            <person name="Rasko D.A."/>
            <person name="Paulsen I.T."/>
            <person name="Ren Q."/>
            <person name="Daugherty S.C."/>
            <person name="DeBoy R.T."/>
            <person name="Dodson R.J."/>
            <person name="Durkin A.S."/>
            <person name="Madupu R."/>
            <person name="Nelson W.C."/>
            <person name="Sullivan S.A."/>
            <person name="Rosovitz M.J."/>
            <person name="Haft D.H."/>
            <person name="Selengut J."/>
            <person name="Ward N."/>
        </authorList>
    </citation>
    <scope>NUCLEOTIDE SEQUENCE [LARGE SCALE GENOMIC DNA]</scope>
    <source>
        <strain>ATCC 700808 / DSM 15171 / DSS-3</strain>
    </source>
</reference>
<reference key="2">
    <citation type="journal article" date="2014" name="Stand. Genomic Sci.">
        <title>An updated genome annotation for the model marine bacterium Ruegeria pomeroyi DSS-3.</title>
        <authorList>
            <person name="Rivers A.R."/>
            <person name="Smith C.B."/>
            <person name="Moran M.A."/>
        </authorList>
    </citation>
    <scope>GENOME REANNOTATION</scope>
    <source>
        <strain>ATCC 700808 / DSM 15171 / DSS-3</strain>
    </source>
</reference>